<evidence type="ECO:0000256" key="1">
    <source>
        <dbReference type="SAM" id="MobiDB-lite"/>
    </source>
</evidence>
<proteinExistence type="predicted"/>
<name>Y9667_DICDI</name>
<keyword id="KW-1185">Reference proteome</keyword>
<accession>Q55FU5</accession>
<gene>
    <name type="ORF">DDB_G0267946</name>
</gene>
<dbReference type="EMBL" id="AAFI02000003">
    <property type="protein sequence ID" value="EAL73426.1"/>
    <property type="molecule type" value="Genomic_DNA"/>
</dbReference>
<dbReference type="RefSeq" id="XP_647438.1">
    <property type="nucleotide sequence ID" value="XM_642346.1"/>
</dbReference>
<dbReference type="PaxDb" id="44689-DDB0189667"/>
<dbReference type="EnsemblProtists" id="EAL73426">
    <property type="protein sequence ID" value="EAL73426"/>
    <property type="gene ID" value="DDB_G0267946"/>
</dbReference>
<dbReference type="GeneID" id="8616245"/>
<dbReference type="KEGG" id="ddi:DDB_G0267946"/>
<dbReference type="dictyBase" id="DDB_G0267946"/>
<dbReference type="HOGENOM" id="CLU_2872310_0_0_1"/>
<dbReference type="InParanoid" id="Q55FU5"/>
<dbReference type="PRO" id="PR:Q55FU5"/>
<dbReference type="Proteomes" id="UP000002195">
    <property type="component" value="Chromosome 1"/>
</dbReference>
<protein>
    <recommendedName>
        <fullName>Putative uncharacterized protein DDB_G0267946</fullName>
    </recommendedName>
</protein>
<organism>
    <name type="scientific">Dictyostelium discoideum</name>
    <name type="common">Social amoeba</name>
    <dbReference type="NCBI Taxonomy" id="44689"/>
    <lineage>
        <taxon>Eukaryota</taxon>
        <taxon>Amoebozoa</taxon>
        <taxon>Evosea</taxon>
        <taxon>Eumycetozoa</taxon>
        <taxon>Dictyostelia</taxon>
        <taxon>Dictyosteliales</taxon>
        <taxon>Dictyosteliaceae</taxon>
        <taxon>Dictyostelium</taxon>
    </lineage>
</organism>
<reference key="1">
    <citation type="journal article" date="2005" name="Nature">
        <title>The genome of the social amoeba Dictyostelium discoideum.</title>
        <authorList>
            <person name="Eichinger L."/>
            <person name="Pachebat J.A."/>
            <person name="Gloeckner G."/>
            <person name="Rajandream M.A."/>
            <person name="Sucgang R."/>
            <person name="Berriman M."/>
            <person name="Song J."/>
            <person name="Olsen R."/>
            <person name="Szafranski K."/>
            <person name="Xu Q."/>
            <person name="Tunggal B."/>
            <person name="Kummerfeld S."/>
            <person name="Madera M."/>
            <person name="Konfortov B.A."/>
            <person name="Rivero F."/>
            <person name="Bankier A.T."/>
            <person name="Lehmann R."/>
            <person name="Hamlin N."/>
            <person name="Davies R."/>
            <person name="Gaudet P."/>
            <person name="Fey P."/>
            <person name="Pilcher K."/>
            <person name="Chen G."/>
            <person name="Saunders D."/>
            <person name="Sodergren E.J."/>
            <person name="Davis P."/>
            <person name="Kerhornou A."/>
            <person name="Nie X."/>
            <person name="Hall N."/>
            <person name="Anjard C."/>
            <person name="Hemphill L."/>
            <person name="Bason N."/>
            <person name="Farbrother P."/>
            <person name="Desany B."/>
            <person name="Just E."/>
            <person name="Morio T."/>
            <person name="Rost R."/>
            <person name="Churcher C.M."/>
            <person name="Cooper J."/>
            <person name="Haydock S."/>
            <person name="van Driessche N."/>
            <person name="Cronin A."/>
            <person name="Goodhead I."/>
            <person name="Muzny D.M."/>
            <person name="Mourier T."/>
            <person name="Pain A."/>
            <person name="Lu M."/>
            <person name="Harper D."/>
            <person name="Lindsay R."/>
            <person name="Hauser H."/>
            <person name="James K.D."/>
            <person name="Quiles M."/>
            <person name="Madan Babu M."/>
            <person name="Saito T."/>
            <person name="Buchrieser C."/>
            <person name="Wardroper A."/>
            <person name="Felder M."/>
            <person name="Thangavelu M."/>
            <person name="Johnson D."/>
            <person name="Knights A."/>
            <person name="Loulseged H."/>
            <person name="Mungall K.L."/>
            <person name="Oliver K."/>
            <person name="Price C."/>
            <person name="Quail M.A."/>
            <person name="Urushihara H."/>
            <person name="Hernandez J."/>
            <person name="Rabbinowitsch E."/>
            <person name="Steffen D."/>
            <person name="Sanders M."/>
            <person name="Ma J."/>
            <person name="Kohara Y."/>
            <person name="Sharp S."/>
            <person name="Simmonds M.N."/>
            <person name="Spiegler S."/>
            <person name="Tivey A."/>
            <person name="Sugano S."/>
            <person name="White B."/>
            <person name="Walker D."/>
            <person name="Woodward J.R."/>
            <person name="Winckler T."/>
            <person name="Tanaka Y."/>
            <person name="Shaulsky G."/>
            <person name="Schleicher M."/>
            <person name="Weinstock G.M."/>
            <person name="Rosenthal A."/>
            <person name="Cox E.C."/>
            <person name="Chisholm R.L."/>
            <person name="Gibbs R.A."/>
            <person name="Loomis W.F."/>
            <person name="Platzer M."/>
            <person name="Kay R.R."/>
            <person name="Williams J.G."/>
            <person name="Dear P.H."/>
            <person name="Noegel A.A."/>
            <person name="Barrell B.G."/>
            <person name="Kuspa A."/>
        </authorList>
    </citation>
    <scope>NUCLEOTIDE SEQUENCE [LARGE SCALE GENOMIC DNA]</scope>
    <source>
        <strain>AX4</strain>
    </source>
</reference>
<feature type="chain" id="PRO_0000348207" description="Putative uncharacterized protein DDB_G0267946">
    <location>
        <begin position="1"/>
        <end position="64"/>
    </location>
</feature>
<feature type="region of interest" description="Disordered" evidence="1">
    <location>
        <begin position="1"/>
        <end position="42"/>
    </location>
</feature>
<feature type="compositionally biased region" description="Polar residues" evidence="1">
    <location>
        <begin position="1"/>
        <end position="14"/>
    </location>
</feature>
<sequence length="64" mass="7493">MFNFDPTDQPTDQHLLQLPTDPHPLQQPIDPHPPPQPNNNLPFLNNHTIIYIYPNNQLTHIHNQ</sequence>